<feature type="chain" id="PRO_0000320912" description="Protein translocase subunit SecA">
    <location>
        <begin position="1"/>
        <end position="930"/>
    </location>
</feature>
<feature type="binding site" evidence="1">
    <location>
        <position position="87"/>
    </location>
    <ligand>
        <name>ATP</name>
        <dbReference type="ChEBI" id="CHEBI:30616"/>
    </ligand>
</feature>
<feature type="binding site" evidence="1">
    <location>
        <begin position="105"/>
        <end position="109"/>
    </location>
    <ligand>
        <name>ATP</name>
        <dbReference type="ChEBI" id="CHEBI:30616"/>
    </ligand>
</feature>
<feature type="binding site" evidence="1">
    <location>
        <position position="515"/>
    </location>
    <ligand>
        <name>ATP</name>
        <dbReference type="ChEBI" id="CHEBI:30616"/>
    </ligand>
</feature>
<feature type="binding site" evidence="1">
    <location>
        <position position="914"/>
    </location>
    <ligand>
        <name>Zn(2+)</name>
        <dbReference type="ChEBI" id="CHEBI:29105"/>
    </ligand>
</feature>
<feature type="binding site" evidence="1">
    <location>
        <position position="916"/>
    </location>
    <ligand>
        <name>Zn(2+)</name>
        <dbReference type="ChEBI" id="CHEBI:29105"/>
    </ligand>
</feature>
<feature type="binding site" evidence="1">
    <location>
        <position position="925"/>
    </location>
    <ligand>
        <name>Zn(2+)</name>
        <dbReference type="ChEBI" id="CHEBI:29105"/>
    </ligand>
</feature>
<feature type="binding site" evidence="1">
    <location>
        <position position="926"/>
    </location>
    <ligand>
        <name>Zn(2+)</name>
        <dbReference type="ChEBI" id="CHEBI:29105"/>
    </ligand>
</feature>
<comment type="function">
    <text evidence="1">Part of the Sec protein translocase complex. Interacts with the SecYEG preprotein conducting channel. Has a central role in coupling the hydrolysis of ATP to the transfer of proteins into and across the cell membrane, serving both as a receptor for the preprotein-SecB complex and as an ATP-driven molecular motor driving the stepwise translocation of polypeptide chains across the membrane.</text>
</comment>
<comment type="catalytic activity">
    <reaction evidence="1">
        <text>ATP + H2O + cellular proteinSide 1 = ADP + phosphate + cellular proteinSide 2.</text>
        <dbReference type="EC" id="7.4.2.8"/>
    </reaction>
</comment>
<comment type="cofactor">
    <cofactor evidence="1">
        <name>Zn(2+)</name>
        <dbReference type="ChEBI" id="CHEBI:29105"/>
    </cofactor>
    <text evidence="1">May bind 1 zinc ion per subunit.</text>
</comment>
<comment type="subunit">
    <text evidence="1">Monomer and homodimer. Part of the essential Sec protein translocation apparatus which comprises SecA, SecYEG and auxiliary proteins SecDF-YajC and YidC.</text>
</comment>
<comment type="subcellular location">
    <subcellularLocation>
        <location evidence="1">Cell inner membrane</location>
        <topology evidence="1">Peripheral membrane protein</topology>
        <orientation evidence="1">Cytoplasmic side</orientation>
    </subcellularLocation>
    <subcellularLocation>
        <location evidence="1">Cytoplasm</location>
    </subcellularLocation>
    <text evidence="1">Distribution is 50-50.</text>
</comment>
<comment type="similarity">
    <text evidence="1">Belongs to the SecA family.</text>
</comment>
<protein>
    <recommendedName>
        <fullName evidence="1">Protein translocase subunit SecA</fullName>
        <ecNumber evidence="1">7.4.2.8</ecNumber>
    </recommendedName>
</protein>
<gene>
    <name evidence="1" type="primary">secA</name>
    <name type="ordered locus">Rmet_3118</name>
</gene>
<accession>Q1LIN6</accession>
<keyword id="KW-0067">ATP-binding</keyword>
<keyword id="KW-0997">Cell inner membrane</keyword>
<keyword id="KW-1003">Cell membrane</keyword>
<keyword id="KW-0963">Cytoplasm</keyword>
<keyword id="KW-0472">Membrane</keyword>
<keyword id="KW-0479">Metal-binding</keyword>
<keyword id="KW-0547">Nucleotide-binding</keyword>
<keyword id="KW-0653">Protein transport</keyword>
<keyword id="KW-1185">Reference proteome</keyword>
<keyword id="KW-1278">Translocase</keyword>
<keyword id="KW-0811">Translocation</keyword>
<keyword id="KW-0813">Transport</keyword>
<keyword id="KW-0862">Zinc</keyword>
<reference key="1">
    <citation type="journal article" date="2010" name="PLoS ONE">
        <title>The complete genome sequence of Cupriavidus metallidurans strain CH34, a master survivalist in harsh and anthropogenic environments.</title>
        <authorList>
            <person name="Janssen P.J."/>
            <person name="Van Houdt R."/>
            <person name="Moors H."/>
            <person name="Monsieurs P."/>
            <person name="Morin N."/>
            <person name="Michaux A."/>
            <person name="Benotmane M.A."/>
            <person name="Leys N."/>
            <person name="Vallaeys T."/>
            <person name="Lapidus A."/>
            <person name="Monchy S."/>
            <person name="Medigue C."/>
            <person name="Taghavi S."/>
            <person name="McCorkle S."/>
            <person name="Dunn J."/>
            <person name="van der Lelie D."/>
            <person name="Mergeay M."/>
        </authorList>
    </citation>
    <scope>NUCLEOTIDE SEQUENCE [LARGE SCALE GENOMIC DNA]</scope>
    <source>
        <strain>ATCC 43123 / DSM 2839 / NBRC 102507 / CH34</strain>
    </source>
</reference>
<proteinExistence type="inferred from homology"/>
<sequence>MITGLLKKVFGSRNERLIKQYRRTVEQINALEPKFEKLSDDELRGMTETFRQRHAGGESLEALLPEAFAVCREASKRIMKMRHFDVQMIGGMVLNDNKIAEMRTGEGKTLTATLAVYLNALTGKGVHVVTVNDYLAQRDAEWMGRLYNFLGLSVGVNLSQMPHDQKQIAYNADITYGTNNEFGFDYLRDNMVYDPSQRVQRPLHYAIVDEVDSILIDEARTPLIISGQAENQTDLYQRMNGIPKLLERQIGEEKADGTGVEKPGDYYVDEKGHQVYLTEAGHEKAEQILSQLGLISEGESLYAPQNITLMHHLYAALRAHSLFHRDQHYVVQNDEVIIVDEFTGRLMTGRRWSDGLHQAVEAKEGVTVQQENQTLATITFQNYFRMYEKLAGMTGTADTEAYEFQEIYGLEVVVIPTNRQAQRKDLQDQIYKTSKERYDAVVRDIRDCYDRGQPVLVGTTSIETSEYLSDLLNKEKLPHQVLNAKQHAREAEIVAQAGRPKMVTIATNMAGRGTDIVLGGNVEKQAGFIEADANLSDAEKAERIAKLKDEWQSLHDQVKAAGGLHIVGTERHESRRIDNQLRGRAGRQGDPGSSRFYLSLDDQLLRIFAGDRVRAIMERLKMPEGEPIEAGIVTRSIESAQRKVEGRNFDIRKQLLQYDDVANDQRKEIYKLRNDVLESQDVGDMVANLRESVLVEVFREYVPAESMEEQWDIAGLEQRLRDDWGLELPLAKTIEGAQSIEDEELLDMILKAAREHYDAKVAQVGRESFAGFERSVMLQSIDTHWREHLAALDHLRQGIHLRGYAQKDPKQEYKRESFELFARLLDVIKSEVTRVVFNVHIQSPEELEQASEQIEEGLAHLENVQYKHDEFAEGAEPVEQAEPARSNTAAAALAAMGGEAALAGMPKVGRNDPCPCGSGKKFKQCHGKLS</sequence>
<dbReference type="EC" id="7.4.2.8" evidence="1"/>
<dbReference type="EMBL" id="CP000352">
    <property type="protein sequence ID" value="ABF09990.1"/>
    <property type="molecule type" value="Genomic_DNA"/>
</dbReference>
<dbReference type="RefSeq" id="WP_011517613.1">
    <property type="nucleotide sequence ID" value="NC_007973.1"/>
</dbReference>
<dbReference type="SMR" id="Q1LIN6"/>
<dbReference type="STRING" id="266264.Rmet_3118"/>
<dbReference type="KEGG" id="rme:Rmet_3118"/>
<dbReference type="eggNOG" id="COG0653">
    <property type="taxonomic scope" value="Bacteria"/>
</dbReference>
<dbReference type="HOGENOM" id="CLU_005314_3_0_4"/>
<dbReference type="Proteomes" id="UP000002429">
    <property type="component" value="Chromosome"/>
</dbReference>
<dbReference type="GO" id="GO:0031522">
    <property type="term" value="C:cell envelope Sec protein transport complex"/>
    <property type="evidence" value="ECO:0007669"/>
    <property type="project" value="TreeGrafter"/>
</dbReference>
<dbReference type="GO" id="GO:0005829">
    <property type="term" value="C:cytosol"/>
    <property type="evidence" value="ECO:0007669"/>
    <property type="project" value="TreeGrafter"/>
</dbReference>
<dbReference type="GO" id="GO:0005886">
    <property type="term" value="C:plasma membrane"/>
    <property type="evidence" value="ECO:0007669"/>
    <property type="project" value="UniProtKB-SubCell"/>
</dbReference>
<dbReference type="GO" id="GO:0005524">
    <property type="term" value="F:ATP binding"/>
    <property type="evidence" value="ECO:0007669"/>
    <property type="project" value="UniProtKB-UniRule"/>
</dbReference>
<dbReference type="GO" id="GO:0046872">
    <property type="term" value="F:metal ion binding"/>
    <property type="evidence" value="ECO:0007669"/>
    <property type="project" value="UniProtKB-KW"/>
</dbReference>
<dbReference type="GO" id="GO:0008564">
    <property type="term" value="F:protein-exporting ATPase activity"/>
    <property type="evidence" value="ECO:0007669"/>
    <property type="project" value="UniProtKB-EC"/>
</dbReference>
<dbReference type="GO" id="GO:0065002">
    <property type="term" value="P:intracellular protein transmembrane transport"/>
    <property type="evidence" value="ECO:0007669"/>
    <property type="project" value="UniProtKB-UniRule"/>
</dbReference>
<dbReference type="GO" id="GO:0017038">
    <property type="term" value="P:protein import"/>
    <property type="evidence" value="ECO:0007669"/>
    <property type="project" value="InterPro"/>
</dbReference>
<dbReference type="GO" id="GO:0006605">
    <property type="term" value="P:protein targeting"/>
    <property type="evidence" value="ECO:0007669"/>
    <property type="project" value="UniProtKB-UniRule"/>
</dbReference>
<dbReference type="GO" id="GO:0043952">
    <property type="term" value="P:protein transport by the Sec complex"/>
    <property type="evidence" value="ECO:0007669"/>
    <property type="project" value="TreeGrafter"/>
</dbReference>
<dbReference type="CDD" id="cd17928">
    <property type="entry name" value="DEXDc_SecA"/>
    <property type="match status" value="1"/>
</dbReference>
<dbReference type="CDD" id="cd18803">
    <property type="entry name" value="SF2_C_secA"/>
    <property type="match status" value="1"/>
</dbReference>
<dbReference type="FunFam" id="3.40.50.300:FF:000081">
    <property type="entry name" value="Preprotein translocase subunit SecA"/>
    <property type="match status" value="1"/>
</dbReference>
<dbReference type="FunFam" id="3.40.50.300:FF:000113">
    <property type="entry name" value="Preprotein translocase subunit SecA"/>
    <property type="match status" value="1"/>
</dbReference>
<dbReference type="FunFam" id="3.90.1440.10:FF:000001">
    <property type="entry name" value="Preprotein translocase subunit SecA"/>
    <property type="match status" value="1"/>
</dbReference>
<dbReference type="FunFam" id="1.10.3060.10:FF:000003">
    <property type="entry name" value="Protein translocase subunit SecA"/>
    <property type="match status" value="1"/>
</dbReference>
<dbReference type="Gene3D" id="1.10.3060.10">
    <property type="entry name" value="Helical scaffold and wing domains of SecA"/>
    <property type="match status" value="1"/>
</dbReference>
<dbReference type="Gene3D" id="3.40.50.300">
    <property type="entry name" value="P-loop containing nucleotide triphosphate hydrolases"/>
    <property type="match status" value="2"/>
</dbReference>
<dbReference type="Gene3D" id="3.90.1440.10">
    <property type="entry name" value="SecA, preprotein cross-linking domain"/>
    <property type="match status" value="1"/>
</dbReference>
<dbReference type="HAMAP" id="MF_01382">
    <property type="entry name" value="SecA"/>
    <property type="match status" value="1"/>
</dbReference>
<dbReference type="InterPro" id="IPR014001">
    <property type="entry name" value="Helicase_ATP-bd"/>
</dbReference>
<dbReference type="InterPro" id="IPR001650">
    <property type="entry name" value="Helicase_C-like"/>
</dbReference>
<dbReference type="InterPro" id="IPR027417">
    <property type="entry name" value="P-loop_NTPase"/>
</dbReference>
<dbReference type="InterPro" id="IPR004027">
    <property type="entry name" value="SEC_C_motif"/>
</dbReference>
<dbReference type="InterPro" id="IPR000185">
    <property type="entry name" value="SecA"/>
</dbReference>
<dbReference type="InterPro" id="IPR020937">
    <property type="entry name" value="SecA_CS"/>
</dbReference>
<dbReference type="InterPro" id="IPR011115">
    <property type="entry name" value="SecA_DEAD"/>
</dbReference>
<dbReference type="InterPro" id="IPR014018">
    <property type="entry name" value="SecA_motor_DEAD"/>
</dbReference>
<dbReference type="InterPro" id="IPR011130">
    <property type="entry name" value="SecA_preprotein_X-link_dom"/>
</dbReference>
<dbReference type="InterPro" id="IPR044722">
    <property type="entry name" value="SecA_SF2_C"/>
</dbReference>
<dbReference type="InterPro" id="IPR011116">
    <property type="entry name" value="SecA_Wing/Scaffold"/>
</dbReference>
<dbReference type="InterPro" id="IPR036266">
    <property type="entry name" value="SecA_Wing/Scaffold_sf"/>
</dbReference>
<dbReference type="InterPro" id="IPR036670">
    <property type="entry name" value="SecA_X-link_sf"/>
</dbReference>
<dbReference type="NCBIfam" id="NF009538">
    <property type="entry name" value="PRK12904.1"/>
    <property type="match status" value="1"/>
</dbReference>
<dbReference type="NCBIfam" id="TIGR00963">
    <property type="entry name" value="secA"/>
    <property type="match status" value="1"/>
</dbReference>
<dbReference type="PANTHER" id="PTHR30612:SF0">
    <property type="entry name" value="CHLOROPLAST PROTEIN-TRANSPORTING ATPASE"/>
    <property type="match status" value="1"/>
</dbReference>
<dbReference type="PANTHER" id="PTHR30612">
    <property type="entry name" value="SECA INNER MEMBRANE COMPONENT OF SEC PROTEIN SECRETION SYSTEM"/>
    <property type="match status" value="1"/>
</dbReference>
<dbReference type="Pfam" id="PF21090">
    <property type="entry name" value="P-loop_SecA"/>
    <property type="match status" value="1"/>
</dbReference>
<dbReference type="Pfam" id="PF02810">
    <property type="entry name" value="SEC-C"/>
    <property type="match status" value="1"/>
</dbReference>
<dbReference type="Pfam" id="PF07517">
    <property type="entry name" value="SecA_DEAD"/>
    <property type="match status" value="1"/>
</dbReference>
<dbReference type="Pfam" id="PF01043">
    <property type="entry name" value="SecA_PP_bind"/>
    <property type="match status" value="1"/>
</dbReference>
<dbReference type="Pfam" id="PF07516">
    <property type="entry name" value="SecA_SW"/>
    <property type="match status" value="1"/>
</dbReference>
<dbReference type="PRINTS" id="PR00906">
    <property type="entry name" value="SECA"/>
</dbReference>
<dbReference type="SMART" id="SM00957">
    <property type="entry name" value="SecA_DEAD"/>
    <property type="match status" value="1"/>
</dbReference>
<dbReference type="SMART" id="SM00958">
    <property type="entry name" value="SecA_PP_bind"/>
    <property type="match status" value="1"/>
</dbReference>
<dbReference type="SUPFAM" id="SSF81886">
    <property type="entry name" value="Helical scaffold and wing domains of SecA"/>
    <property type="match status" value="1"/>
</dbReference>
<dbReference type="SUPFAM" id="SSF52540">
    <property type="entry name" value="P-loop containing nucleoside triphosphate hydrolases"/>
    <property type="match status" value="2"/>
</dbReference>
<dbReference type="SUPFAM" id="SSF81767">
    <property type="entry name" value="Pre-protein crosslinking domain of SecA"/>
    <property type="match status" value="1"/>
</dbReference>
<dbReference type="PROSITE" id="PS01312">
    <property type="entry name" value="SECA"/>
    <property type="match status" value="1"/>
</dbReference>
<dbReference type="PROSITE" id="PS51196">
    <property type="entry name" value="SECA_MOTOR_DEAD"/>
    <property type="match status" value="1"/>
</dbReference>
<organism>
    <name type="scientific">Cupriavidus metallidurans (strain ATCC 43123 / DSM 2839 / NBRC 102507 / CH34)</name>
    <name type="common">Ralstonia metallidurans</name>
    <dbReference type="NCBI Taxonomy" id="266264"/>
    <lineage>
        <taxon>Bacteria</taxon>
        <taxon>Pseudomonadati</taxon>
        <taxon>Pseudomonadota</taxon>
        <taxon>Betaproteobacteria</taxon>
        <taxon>Burkholderiales</taxon>
        <taxon>Burkholderiaceae</taxon>
        <taxon>Cupriavidus</taxon>
    </lineage>
</organism>
<name>SECA_CUPMC</name>
<evidence type="ECO:0000255" key="1">
    <source>
        <dbReference type="HAMAP-Rule" id="MF_01382"/>
    </source>
</evidence>